<feature type="chain" id="PRO_1000116588" description="Ribosome maturation factor RimM">
    <location>
        <begin position="1"/>
        <end position="184"/>
    </location>
</feature>
<feature type="domain" description="PRC barrel" evidence="1">
    <location>
        <begin position="104"/>
        <end position="184"/>
    </location>
</feature>
<protein>
    <recommendedName>
        <fullName evidence="1">Ribosome maturation factor RimM</fullName>
    </recommendedName>
</protein>
<sequence length="184" mass="21292">MSMKGKETMSKQNEKLVVGKLGSSYGIRGWLKVFSYTDNPESIFDYSPWYIDQKGEWVEYKVEGWKRHNKGWVVKLQGLDVREDAHLLTNFEIAIDPASLPELSEDEFYWRELFGMQVVTTNGYDLGVVTDMMETGSNDVLVVKANLKDAFGQKERLIPFLEEQVIKVVDRQAQRIEVDWDPAF</sequence>
<comment type="function">
    <text evidence="1">An accessory protein needed during the final step in the assembly of 30S ribosomal subunit, possibly for assembly of the head region. Essential for efficient processing of 16S rRNA. May be needed both before and after RbfA during the maturation of 16S rRNA. It has affinity for free ribosomal 30S subunits but not for 70S ribosomes.</text>
</comment>
<comment type="subunit">
    <text evidence="1">Binds ribosomal protein uS19.</text>
</comment>
<comment type="subcellular location">
    <subcellularLocation>
        <location evidence="1">Cytoplasm</location>
    </subcellularLocation>
</comment>
<comment type="domain">
    <text evidence="1">The PRC barrel domain binds ribosomal protein uS19.</text>
</comment>
<comment type="similarity">
    <text evidence="1">Belongs to the RimM family.</text>
</comment>
<gene>
    <name evidence="1" type="primary">rimM</name>
    <name type="ordered locus">VCM66_0520</name>
</gene>
<dbReference type="EMBL" id="CP001233">
    <property type="protein sequence ID" value="ACP04845.1"/>
    <property type="molecule type" value="Genomic_DNA"/>
</dbReference>
<dbReference type="RefSeq" id="WP_000061906.1">
    <property type="nucleotide sequence ID" value="NC_012578.1"/>
</dbReference>
<dbReference type="SMR" id="C3LS52"/>
<dbReference type="GeneID" id="88784060"/>
<dbReference type="KEGG" id="vcm:VCM66_0520"/>
<dbReference type="HOGENOM" id="CLU_077636_1_0_6"/>
<dbReference type="Proteomes" id="UP000001217">
    <property type="component" value="Chromosome I"/>
</dbReference>
<dbReference type="GO" id="GO:0005737">
    <property type="term" value="C:cytoplasm"/>
    <property type="evidence" value="ECO:0007669"/>
    <property type="project" value="UniProtKB-SubCell"/>
</dbReference>
<dbReference type="GO" id="GO:0005840">
    <property type="term" value="C:ribosome"/>
    <property type="evidence" value="ECO:0007669"/>
    <property type="project" value="InterPro"/>
</dbReference>
<dbReference type="GO" id="GO:0043022">
    <property type="term" value="F:ribosome binding"/>
    <property type="evidence" value="ECO:0007669"/>
    <property type="project" value="InterPro"/>
</dbReference>
<dbReference type="GO" id="GO:0042274">
    <property type="term" value="P:ribosomal small subunit biogenesis"/>
    <property type="evidence" value="ECO:0007669"/>
    <property type="project" value="UniProtKB-UniRule"/>
</dbReference>
<dbReference type="GO" id="GO:0006364">
    <property type="term" value="P:rRNA processing"/>
    <property type="evidence" value="ECO:0007669"/>
    <property type="project" value="UniProtKB-UniRule"/>
</dbReference>
<dbReference type="FunFam" id="2.30.30.240:FF:000001">
    <property type="entry name" value="Ribosome maturation factor RimM"/>
    <property type="match status" value="1"/>
</dbReference>
<dbReference type="Gene3D" id="2.30.30.240">
    <property type="entry name" value="PRC-barrel domain"/>
    <property type="match status" value="1"/>
</dbReference>
<dbReference type="Gene3D" id="2.40.30.60">
    <property type="entry name" value="RimM"/>
    <property type="match status" value="1"/>
</dbReference>
<dbReference type="HAMAP" id="MF_00014">
    <property type="entry name" value="Ribosome_mat_RimM"/>
    <property type="match status" value="1"/>
</dbReference>
<dbReference type="InterPro" id="IPR027275">
    <property type="entry name" value="PRC-brl_dom"/>
</dbReference>
<dbReference type="InterPro" id="IPR011033">
    <property type="entry name" value="PRC_barrel-like_sf"/>
</dbReference>
<dbReference type="InterPro" id="IPR011961">
    <property type="entry name" value="RimM"/>
</dbReference>
<dbReference type="InterPro" id="IPR002676">
    <property type="entry name" value="RimM_N"/>
</dbReference>
<dbReference type="InterPro" id="IPR036976">
    <property type="entry name" value="RimM_N_sf"/>
</dbReference>
<dbReference type="InterPro" id="IPR009000">
    <property type="entry name" value="Transl_B-barrel_sf"/>
</dbReference>
<dbReference type="NCBIfam" id="TIGR02273">
    <property type="entry name" value="16S_RimM"/>
    <property type="match status" value="1"/>
</dbReference>
<dbReference type="PANTHER" id="PTHR33692">
    <property type="entry name" value="RIBOSOME MATURATION FACTOR RIMM"/>
    <property type="match status" value="1"/>
</dbReference>
<dbReference type="PANTHER" id="PTHR33692:SF1">
    <property type="entry name" value="RIBOSOME MATURATION FACTOR RIMM"/>
    <property type="match status" value="1"/>
</dbReference>
<dbReference type="Pfam" id="PF05239">
    <property type="entry name" value="PRC"/>
    <property type="match status" value="1"/>
</dbReference>
<dbReference type="Pfam" id="PF01782">
    <property type="entry name" value="RimM"/>
    <property type="match status" value="1"/>
</dbReference>
<dbReference type="SUPFAM" id="SSF50346">
    <property type="entry name" value="PRC-barrel domain"/>
    <property type="match status" value="1"/>
</dbReference>
<dbReference type="SUPFAM" id="SSF50447">
    <property type="entry name" value="Translation proteins"/>
    <property type="match status" value="1"/>
</dbReference>
<proteinExistence type="inferred from homology"/>
<accession>C3LS52</accession>
<keyword id="KW-0143">Chaperone</keyword>
<keyword id="KW-0963">Cytoplasm</keyword>
<keyword id="KW-0690">Ribosome biogenesis</keyword>
<keyword id="KW-0698">rRNA processing</keyword>
<evidence type="ECO:0000255" key="1">
    <source>
        <dbReference type="HAMAP-Rule" id="MF_00014"/>
    </source>
</evidence>
<reference key="1">
    <citation type="journal article" date="2008" name="PLoS ONE">
        <title>A recalibrated molecular clock and independent origins for the cholera pandemic clones.</title>
        <authorList>
            <person name="Feng L."/>
            <person name="Reeves P.R."/>
            <person name="Lan R."/>
            <person name="Ren Y."/>
            <person name="Gao C."/>
            <person name="Zhou Z."/>
            <person name="Ren Y."/>
            <person name="Cheng J."/>
            <person name="Wang W."/>
            <person name="Wang J."/>
            <person name="Qian W."/>
            <person name="Li D."/>
            <person name="Wang L."/>
        </authorList>
    </citation>
    <scope>NUCLEOTIDE SEQUENCE [LARGE SCALE GENOMIC DNA]</scope>
    <source>
        <strain>M66-2</strain>
    </source>
</reference>
<name>RIMM_VIBCM</name>
<organism>
    <name type="scientific">Vibrio cholerae serotype O1 (strain M66-2)</name>
    <dbReference type="NCBI Taxonomy" id="579112"/>
    <lineage>
        <taxon>Bacteria</taxon>
        <taxon>Pseudomonadati</taxon>
        <taxon>Pseudomonadota</taxon>
        <taxon>Gammaproteobacteria</taxon>
        <taxon>Vibrionales</taxon>
        <taxon>Vibrionaceae</taxon>
        <taxon>Vibrio</taxon>
    </lineage>
</organism>